<keyword id="KW-0008">Acetylcholine receptor inhibiting toxin</keyword>
<keyword id="KW-0903">Direct protein sequencing</keyword>
<keyword id="KW-1015">Disulfide bond</keyword>
<keyword id="KW-0872">Ion channel impairing toxin</keyword>
<keyword id="KW-0528">Neurotoxin</keyword>
<keyword id="KW-0629">Postsynaptic neurotoxin</keyword>
<keyword id="KW-0964">Secreted</keyword>
<keyword id="KW-0800">Toxin</keyword>
<protein>
    <recommendedName>
        <fullName evidence="4">Three-finger toxin Tschuditoxin-I</fullName>
    </recommendedName>
</protein>
<comment type="function">
    <text evidence="2 3">Produces peripheral paralysis by blocking neuromuscular transmission at the postsynaptic site (By similarity). Binds to and inhibits the endogenous nicotinic acetylcholine receptors (nAChR) (By similarity). This neurotoxin is lethal to mice by intraperitoneal or intravenous injection (PubMed:31211957).</text>
</comment>
<comment type="subcellular location">
    <subcellularLocation>
        <location evidence="3">Secreted</location>
    </subcellularLocation>
</comment>
<comment type="tissue specificity">
    <text evidence="6">Expressed by the venom gland.</text>
</comment>
<comment type="mass spectrometry"/>
<comment type="similarity">
    <text evidence="5">Belongs to the three-finger toxin family. Short-chain subfamily. Type I alpha-neurotoxin sub-subfamily.</text>
</comment>
<name>3S11_MICTC</name>
<reference evidence="5" key="1">
    <citation type="journal article" date="2019" name="Toxicon">
        <title>Three-finger toxins from the venom of Micrurus tschudii tschudii (desert coral snake): Isolation and characterization of tschuditoxin-I.</title>
        <authorList>
            <person name="Lomonte B."/>
            <person name="Camacho E."/>
            <person name="Fernandez J."/>
            <person name="Salas M."/>
            <person name="Zavaleta A."/>
        </authorList>
    </citation>
    <scope>PROTEIN SEQUENCE</scope>
    <scope>FUNCTION</scope>
    <scope>SUBCELLULAR LOCATION</scope>
    <scope>TISSUE SPECIFICITY</scope>
    <scope>MASS SPECTROMETRY</scope>
    <scope>IDENTIFICATION BY MASS SPECTROMETRY</scope>
    <source>
        <tissue evidence="4">Venom</tissue>
    </source>
</reference>
<proteinExistence type="evidence at protein level"/>
<sequence>MICYNQQSSEPPTTKTCSEGQCYKKTWSDHRGTIIERGCACPNVKPGVKISCCSSDK</sequence>
<accession>C0HLK3</accession>
<dbReference type="SMR" id="C0HLK3"/>
<dbReference type="GO" id="GO:0005576">
    <property type="term" value="C:extracellular region"/>
    <property type="evidence" value="ECO:0000314"/>
    <property type="project" value="UniProtKB"/>
</dbReference>
<dbReference type="GO" id="GO:0030550">
    <property type="term" value="F:acetylcholine receptor inhibitor activity"/>
    <property type="evidence" value="ECO:0007669"/>
    <property type="project" value="UniProtKB-KW"/>
</dbReference>
<dbReference type="GO" id="GO:0099106">
    <property type="term" value="F:ion channel regulator activity"/>
    <property type="evidence" value="ECO:0007669"/>
    <property type="project" value="UniProtKB-KW"/>
</dbReference>
<dbReference type="GO" id="GO:0090729">
    <property type="term" value="F:toxin activity"/>
    <property type="evidence" value="ECO:0000314"/>
    <property type="project" value="UniProtKB"/>
</dbReference>
<dbReference type="CDD" id="cd00206">
    <property type="entry name" value="TFP_snake_toxin"/>
    <property type="match status" value="1"/>
</dbReference>
<dbReference type="FunFam" id="2.10.60.10:FF:000024">
    <property type="entry name" value="Cytotoxin 1"/>
    <property type="match status" value="1"/>
</dbReference>
<dbReference type="Gene3D" id="2.10.60.10">
    <property type="entry name" value="CD59"/>
    <property type="match status" value="1"/>
</dbReference>
<dbReference type="InterPro" id="IPR003571">
    <property type="entry name" value="Snake_3FTx"/>
</dbReference>
<dbReference type="InterPro" id="IPR045860">
    <property type="entry name" value="Snake_toxin-like_sf"/>
</dbReference>
<dbReference type="InterPro" id="IPR018354">
    <property type="entry name" value="Snake_toxin_con_site"/>
</dbReference>
<dbReference type="InterPro" id="IPR054131">
    <property type="entry name" value="Toxin_cobra-type"/>
</dbReference>
<dbReference type="Pfam" id="PF21947">
    <property type="entry name" value="Toxin_cobra-type"/>
    <property type="match status" value="1"/>
</dbReference>
<dbReference type="SUPFAM" id="SSF57302">
    <property type="entry name" value="Snake toxin-like"/>
    <property type="match status" value="1"/>
</dbReference>
<dbReference type="PROSITE" id="PS00272">
    <property type="entry name" value="SNAKE_TOXIN"/>
    <property type="match status" value="1"/>
</dbReference>
<feature type="chain" id="PRO_0000450618" description="Three-finger toxin Tschuditoxin-I">
    <location>
        <begin position="1"/>
        <end position="57" status="greater than"/>
    </location>
</feature>
<feature type="disulfide bond" evidence="1">
    <location>
        <begin position="3"/>
        <end position="22"/>
    </location>
</feature>
<feature type="disulfide bond" evidence="1">
    <location>
        <begin position="17"/>
        <end position="39"/>
    </location>
</feature>
<feature type="disulfide bond" evidence="1">
    <location>
        <begin position="41"/>
        <end position="52"/>
    </location>
</feature>
<feature type="unsure residue" description="K or Q" evidence="3">
    <location>
        <position position="45"/>
    </location>
</feature>
<feature type="unsure residue" description="I or L" evidence="3">
    <location>
        <position position="50"/>
    </location>
</feature>
<feature type="non-terminal residue" evidence="4">
    <location>
        <position position="57"/>
    </location>
</feature>
<evidence type="ECO:0000250" key="1">
    <source>
        <dbReference type="UniProtKB" id="P01426"/>
    </source>
</evidence>
<evidence type="ECO:0000250" key="2">
    <source>
        <dbReference type="UniProtKB" id="P86095"/>
    </source>
</evidence>
<evidence type="ECO:0000269" key="3">
    <source>
    </source>
</evidence>
<evidence type="ECO:0000303" key="4">
    <source>
    </source>
</evidence>
<evidence type="ECO:0000305" key="5"/>
<evidence type="ECO:0000305" key="6">
    <source>
    </source>
</evidence>
<organism evidence="4">
    <name type="scientific">Micrurus tschudii</name>
    <name type="common">Desert coral snake</name>
    <dbReference type="NCBI Taxonomy" id="2527855"/>
    <lineage>
        <taxon>Eukaryota</taxon>
        <taxon>Metazoa</taxon>
        <taxon>Chordata</taxon>
        <taxon>Craniata</taxon>
        <taxon>Vertebrata</taxon>
        <taxon>Euteleostomi</taxon>
        <taxon>Lepidosauria</taxon>
        <taxon>Squamata</taxon>
        <taxon>Bifurcata</taxon>
        <taxon>Unidentata</taxon>
        <taxon>Episquamata</taxon>
        <taxon>Toxicofera</taxon>
        <taxon>Serpentes</taxon>
        <taxon>Colubroidea</taxon>
        <taxon>Elapidae</taxon>
        <taxon>Elapinae</taxon>
        <taxon>Micrurus</taxon>
    </lineage>
</organism>